<gene>
    <name evidence="1" type="primary">pdxS</name>
    <name type="ordered locus">Dtur_1484</name>
</gene>
<feature type="chain" id="PRO_1000188225" description="Pyridoxal 5'-phosphate synthase subunit PdxS">
    <location>
        <begin position="1"/>
        <end position="295"/>
    </location>
</feature>
<feature type="active site" description="Schiff-base intermediate with D-ribose 5-phosphate" evidence="1">
    <location>
        <position position="82"/>
    </location>
</feature>
<feature type="binding site" evidence="1">
    <location>
        <position position="25"/>
    </location>
    <ligand>
        <name>D-ribose 5-phosphate</name>
        <dbReference type="ChEBI" id="CHEBI:78346"/>
    </ligand>
</feature>
<feature type="binding site" evidence="1">
    <location>
        <position position="154"/>
    </location>
    <ligand>
        <name>D-ribose 5-phosphate</name>
        <dbReference type="ChEBI" id="CHEBI:78346"/>
    </ligand>
</feature>
<feature type="binding site" evidence="1">
    <location>
        <position position="166"/>
    </location>
    <ligand>
        <name>D-glyceraldehyde 3-phosphate</name>
        <dbReference type="ChEBI" id="CHEBI:59776"/>
    </ligand>
</feature>
<feature type="binding site" evidence="1">
    <location>
        <position position="215"/>
    </location>
    <ligand>
        <name>D-ribose 5-phosphate</name>
        <dbReference type="ChEBI" id="CHEBI:78346"/>
    </ligand>
</feature>
<feature type="binding site" evidence="1">
    <location>
        <begin position="236"/>
        <end position="237"/>
    </location>
    <ligand>
        <name>D-ribose 5-phosphate</name>
        <dbReference type="ChEBI" id="CHEBI:78346"/>
    </ligand>
</feature>
<name>PDXS_DICTD</name>
<comment type="function">
    <text evidence="1">Catalyzes the formation of pyridoxal 5'-phosphate from ribose 5-phosphate (RBP), glyceraldehyde 3-phosphate (G3P) and ammonia. The ammonia is provided by the PdxT subunit. Can also use ribulose 5-phosphate and dihydroxyacetone phosphate as substrates, resulting from enzyme-catalyzed isomerization of RBP and G3P, respectively.</text>
</comment>
<comment type="catalytic activity">
    <reaction evidence="1">
        <text>aldehydo-D-ribose 5-phosphate + D-glyceraldehyde 3-phosphate + L-glutamine = pyridoxal 5'-phosphate + L-glutamate + phosphate + 3 H2O + H(+)</text>
        <dbReference type="Rhea" id="RHEA:31507"/>
        <dbReference type="ChEBI" id="CHEBI:15377"/>
        <dbReference type="ChEBI" id="CHEBI:15378"/>
        <dbReference type="ChEBI" id="CHEBI:29985"/>
        <dbReference type="ChEBI" id="CHEBI:43474"/>
        <dbReference type="ChEBI" id="CHEBI:58273"/>
        <dbReference type="ChEBI" id="CHEBI:58359"/>
        <dbReference type="ChEBI" id="CHEBI:59776"/>
        <dbReference type="ChEBI" id="CHEBI:597326"/>
        <dbReference type="EC" id="4.3.3.6"/>
    </reaction>
</comment>
<comment type="pathway">
    <text evidence="1">Cofactor biosynthesis; pyridoxal 5'-phosphate biosynthesis.</text>
</comment>
<comment type="subunit">
    <text evidence="1">In the presence of PdxT, forms a dodecamer of heterodimers.</text>
</comment>
<comment type="similarity">
    <text evidence="1">Belongs to the PdxS/SNZ family.</text>
</comment>
<dbReference type="EC" id="4.3.3.6" evidence="1"/>
<dbReference type="EMBL" id="CP001251">
    <property type="protein sequence ID" value="ACK42758.1"/>
    <property type="molecule type" value="Genomic_DNA"/>
</dbReference>
<dbReference type="RefSeq" id="WP_012583836.1">
    <property type="nucleotide sequence ID" value="NC_011661.1"/>
</dbReference>
<dbReference type="RefSeq" id="YP_002353372.1">
    <property type="nucleotide sequence ID" value="NC_011661.1"/>
</dbReference>
<dbReference type="SMR" id="B8E121"/>
<dbReference type="FunCoup" id="B8E121">
    <property type="interactions" value="182"/>
</dbReference>
<dbReference type="STRING" id="515635.Dtur_1484"/>
<dbReference type="EnsemblBacteria" id="ACK42758">
    <property type="protein sequence ID" value="ACK42758"/>
    <property type="gene ID" value="Dtur_1484"/>
</dbReference>
<dbReference type="KEGG" id="dtu:Dtur_1484"/>
<dbReference type="PATRIC" id="fig|515635.4.peg.1533"/>
<dbReference type="eggNOG" id="COG0214">
    <property type="taxonomic scope" value="Bacteria"/>
</dbReference>
<dbReference type="HOGENOM" id="CLU_055352_1_0_0"/>
<dbReference type="InParanoid" id="B8E121"/>
<dbReference type="OrthoDB" id="9772545at2"/>
<dbReference type="UniPathway" id="UPA00245"/>
<dbReference type="Proteomes" id="UP000007719">
    <property type="component" value="Chromosome"/>
</dbReference>
<dbReference type="GO" id="GO:0016843">
    <property type="term" value="F:amine-lyase activity"/>
    <property type="evidence" value="ECO:0000318"/>
    <property type="project" value="GO_Central"/>
</dbReference>
<dbReference type="GO" id="GO:0036381">
    <property type="term" value="F:pyridoxal 5'-phosphate synthase (glutamine hydrolysing) activity"/>
    <property type="evidence" value="ECO:0007669"/>
    <property type="project" value="UniProtKB-UniRule"/>
</dbReference>
<dbReference type="GO" id="GO:0006520">
    <property type="term" value="P:amino acid metabolic process"/>
    <property type="evidence" value="ECO:0000318"/>
    <property type="project" value="GO_Central"/>
</dbReference>
<dbReference type="GO" id="GO:0042823">
    <property type="term" value="P:pyridoxal phosphate biosynthetic process"/>
    <property type="evidence" value="ECO:0000318"/>
    <property type="project" value="GO_Central"/>
</dbReference>
<dbReference type="GO" id="GO:0008615">
    <property type="term" value="P:pyridoxine biosynthetic process"/>
    <property type="evidence" value="ECO:0000318"/>
    <property type="project" value="GO_Central"/>
</dbReference>
<dbReference type="CDD" id="cd04727">
    <property type="entry name" value="pdxS"/>
    <property type="match status" value="1"/>
</dbReference>
<dbReference type="FunFam" id="3.20.20.70:FF:000001">
    <property type="entry name" value="Pyridoxine biosynthesis protein PDX1"/>
    <property type="match status" value="1"/>
</dbReference>
<dbReference type="Gene3D" id="3.20.20.70">
    <property type="entry name" value="Aldolase class I"/>
    <property type="match status" value="1"/>
</dbReference>
<dbReference type="HAMAP" id="MF_01824">
    <property type="entry name" value="PdxS"/>
    <property type="match status" value="1"/>
</dbReference>
<dbReference type="InterPro" id="IPR013785">
    <property type="entry name" value="Aldolase_TIM"/>
</dbReference>
<dbReference type="InterPro" id="IPR001852">
    <property type="entry name" value="PdxS/SNZ"/>
</dbReference>
<dbReference type="InterPro" id="IPR033755">
    <property type="entry name" value="PdxS/SNZ_N"/>
</dbReference>
<dbReference type="InterPro" id="IPR011060">
    <property type="entry name" value="RibuloseP-bd_barrel"/>
</dbReference>
<dbReference type="NCBIfam" id="NF003215">
    <property type="entry name" value="PRK04180.1"/>
    <property type="match status" value="1"/>
</dbReference>
<dbReference type="NCBIfam" id="TIGR00343">
    <property type="entry name" value="pyridoxal 5'-phosphate synthase lyase subunit PdxS"/>
    <property type="match status" value="1"/>
</dbReference>
<dbReference type="PANTHER" id="PTHR31829">
    <property type="entry name" value="PYRIDOXAL 5'-PHOSPHATE SYNTHASE SUBUNIT SNZ1-RELATED"/>
    <property type="match status" value="1"/>
</dbReference>
<dbReference type="PANTHER" id="PTHR31829:SF0">
    <property type="entry name" value="PYRIDOXAL 5'-PHOSPHATE SYNTHASE SUBUNIT SNZ1-RELATED"/>
    <property type="match status" value="1"/>
</dbReference>
<dbReference type="Pfam" id="PF01680">
    <property type="entry name" value="SOR_SNZ"/>
    <property type="match status" value="1"/>
</dbReference>
<dbReference type="PIRSF" id="PIRSF029271">
    <property type="entry name" value="Pdx1"/>
    <property type="match status" value="1"/>
</dbReference>
<dbReference type="SUPFAM" id="SSF51366">
    <property type="entry name" value="Ribulose-phoshate binding barrel"/>
    <property type="match status" value="1"/>
</dbReference>
<dbReference type="PROSITE" id="PS01235">
    <property type="entry name" value="PDXS_SNZ_1"/>
    <property type="match status" value="1"/>
</dbReference>
<dbReference type="PROSITE" id="PS51129">
    <property type="entry name" value="PDXS_SNZ_2"/>
    <property type="match status" value="1"/>
</dbReference>
<evidence type="ECO:0000255" key="1">
    <source>
        <dbReference type="HAMAP-Rule" id="MF_01824"/>
    </source>
</evidence>
<protein>
    <recommendedName>
        <fullName evidence="1">Pyridoxal 5'-phosphate synthase subunit PdxS</fullName>
        <shortName evidence="1">PLP synthase subunit PdxS</shortName>
        <ecNumber evidence="1">4.3.3.6</ecNumber>
    </recommendedName>
    <alternativeName>
        <fullName evidence="1">Pdx1</fullName>
    </alternativeName>
</protein>
<organism>
    <name type="scientific">Dictyoglomus turgidum (strain DSM 6724 / Z-1310)</name>
    <dbReference type="NCBI Taxonomy" id="515635"/>
    <lineage>
        <taxon>Bacteria</taxon>
        <taxon>Pseudomonadati</taxon>
        <taxon>Dictyoglomota</taxon>
        <taxon>Dictyoglomia</taxon>
        <taxon>Dictyoglomales</taxon>
        <taxon>Dictyoglomaceae</taxon>
        <taxon>Dictyoglomus</taxon>
    </lineage>
</organism>
<reference key="1">
    <citation type="journal article" date="2016" name="Front. Microbiol.">
        <title>The complete genome sequence of hyperthermophile Dictyoglomus turgidum DSM 6724 reveals a specialized carbohydrate fermentor.</title>
        <authorList>
            <person name="Brumm P.J."/>
            <person name="Gowda K."/>
            <person name="Robb F.T."/>
            <person name="Mead D.A."/>
        </authorList>
    </citation>
    <scope>NUCLEOTIDE SEQUENCE [LARGE SCALE GENOMIC DNA]</scope>
    <source>
        <strain>DSM 6724 / Z-1310</strain>
    </source>
</reference>
<keyword id="KW-0456">Lyase</keyword>
<keyword id="KW-0663">Pyridoxal phosphate</keyword>
<keyword id="KW-1185">Reference proteome</keyword>
<keyword id="KW-0704">Schiff base</keyword>
<proteinExistence type="inferred from homology"/>
<sequence>MQVFTGTDKVKRGLAQMLKGGVIMDVTNAEQAEIAEEAGAVAVMALERVPADIRAEGGVARMADPKKIKEIMSAVSIPVMAKVRIGHFVEAQILEALGVDFIDESEVLTPADEKYHINKHAFKVPFVCGARDLGEALRRIAEGAAMIRTKGEAGTGNVVEAVRHMRQIMDEIRSLVLLPDEELVAKAKELGAPLDLIIETKKLGRLPVVNFAAGGIATPADAALMMHLGADGVFVGSGIFKSKNPRKRARAIVLAVTYYDDPYVLAEISEDLGEPMPGIDVRKLSESELLQVRGW</sequence>
<accession>B8E121</accession>